<accession>Q5BGA9</accession>
<accession>C8VTG4</accession>
<dbReference type="EMBL" id="AACD01000007">
    <property type="protein sequence ID" value="EAA66520.1"/>
    <property type="molecule type" value="Genomic_DNA"/>
</dbReference>
<dbReference type="EMBL" id="BN001308">
    <property type="protein sequence ID" value="CBF89520.1"/>
    <property type="molecule type" value="Genomic_DNA"/>
</dbReference>
<dbReference type="RefSeq" id="XP_658025.1">
    <property type="nucleotide sequence ID" value="XM_652933.1"/>
</dbReference>
<dbReference type="SMR" id="Q5BGA9"/>
<dbReference type="FunCoup" id="Q5BGA9">
    <property type="interactions" value="1107"/>
</dbReference>
<dbReference type="STRING" id="227321.Q5BGA9"/>
<dbReference type="EnsemblFungi" id="CBF89520">
    <property type="protein sequence ID" value="CBF89520"/>
    <property type="gene ID" value="ANIA_00421"/>
</dbReference>
<dbReference type="KEGG" id="ani:ANIA_00421"/>
<dbReference type="VEuPathDB" id="FungiDB:AN0421"/>
<dbReference type="eggNOG" id="KOG0110">
    <property type="taxonomic scope" value="Eukaryota"/>
</dbReference>
<dbReference type="HOGENOM" id="CLU_008479_0_0_1"/>
<dbReference type="InParanoid" id="Q5BGA9"/>
<dbReference type="OMA" id="FNNTCIQ"/>
<dbReference type="OrthoDB" id="439639at2759"/>
<dbReference type="Proteomes" id="UP000000560">
    <property type="component" value="Chromosome VIII"/>
</dbReference>
<dbReference type="GO" id="GO:0030686">
    <property type="term" value="C:90S preribosome"/>
    <property type="evidence" value="ECO:0007669"/>
    <property type="project" value="EnsemblFungi"/>
</dbReference>
<dbReference type="GO" id="GO:0005737">
    <property type="term" value="C:cytoplasm"/>
    <property type="evidence" value="ECO:0000318"/>
    <property type="project" value="GO_Central"/>
</dbReference>
<dbReference type="GO" id="GO:0005730">
    <property type="term" value="C:nucleolus"/>
    <property type="evidence" value="ECO:0007669"/>
    <property type="project" value="EnsemblFungi"/>
</dbReference>
<dbReference type="GO" id="GO:0005634">
    <property type="term" value="C:nucleus"/>
    <property type="evidence" value="ECO:0000318"/>
    <property type="project" value="GO_Central"/>
</dbReference>
<dbReference type="GO" id="GO:1990904">
    <property type="term" value="C:ribonucleoprotein complex"/>
    <property type="evidence" value="ECO:0000318"/>
    <property type="project" value="GO_Central"/>
</dbReference>
<dbReference type="GO" id="GO:0032040">
    <property type="term" value="C:small-subunit processome"/>
    <property type="evidence" value="ECO:0007669"/>
    <property type="project" value="EnsemblFungi"/>
</dbReference>
<dbReference type="GO" id="GO:0003729">
    <property type="term" value="F:mRNA binding"/>
    <property type="evidence" value="ECO:0000318"/>
    <property type="project" value="GO_Central"/>
</dbReference>
<dbReference type="GO" id="GO:0042134">
    <property type="term" value="F:rRNA primary transcript binding"/>
    <property type="evidence" value="ECO:0007669"/>
    <property type="project" value="EnsemblFungi"/>
</dbReference>
<dbReference type="GO" id="GO:0000480">
    <property type="term" value="P:endonucleolytic cleavage in 5'-ETS of tricistronic rRNA transcript (SSU-rRNA, 5.8S rRNA, LSU-rRNA)"/>
    <property type="evidence" value="ECO:0007669"/>
    <property type="project" value="EnsemblFungi"/>
</dbReference>
<dbReference type="GO" id="GO:0000447">
    <property type="term" value="P:endonucleolytic cleavage in ITS1 to separate SSU-rRNA from 5.8S rRNA and LSU-rRNA from tricistronic rRNA transcript (SSU-rRNA, 5.8S rRNA, LSU-rRNA)"/>
    <property type="evidence" value="ECO:0007669"/>
    <property type="project" value="EnsemblFungi"/>
</dbReference>
<dbReference type="GO" id="GO:0000472">
    <property type="term" value="P:endonucleolytic cleavage to generate mature 5'-end of SSU-rRNA from (SSU-rRNA, 5.8S rRNA, LSU-rRNA)"/>
    <property type="evidence" value="ECO:0007669"/>
    <property type="project" value="EnsemblFungi"/>
</dbReference>
<dbReference type="GO" id="GO:0034462">
    <property type="term" value="P:small-subunit processome assembly"/>
    <property type="evidence" value="ECO:0007669"/>
    <property type="project" value="EnsemblFungi"/>
</dbReference>
<dbReference type="CDD" id="cd12565">
    <property type="entry name" value="RRM1_MRD1"/>
    <property type="match status" value="1"/>
</dbReference>
<dbReference type="CDD" id="cd12568">
    <property type="entry name" value="RRM3_MRD1"/>
    <property type="match status" value="1"/>
</dbReference>
<dbReference type="CDD" id="cd12319">
    <property type="entry name" value="RRM4_MRD1"/>
    <property type="match status" value="1"/>
</dbReference>
<dbReference type="CDD" id="cd12570">
    <property type="entry name" value="RRM5_MRD1"/>
    <property type="match status" value="1"/>
</dbReference>
<dbReference type="FunFam" id="3.30.70.330:FF:000247">
    <property type="entry name" value="Multiple RNA-binding domain-containing protein 1"/>
    <property type="match status" value="1"/>
</dbReference>
<dbReference type="FunFam" id="3.30.70.330:FF:000452">
    <property type="entry name" value="Multiple RNA-binding domain-containing protein 1"/>
    <property type="match status" value="1"/>
</dbReference>
<dbReference type="FunFam" id="3.30.70.330:FF:000459">
    <property type="entry name" value="Multiple RNA-binding domain-containing protein 1"/>
    <property type="match status" value="1"/>
</dbReference>
<dbReference type="FunFam" id="3.30.70.330:FF:000839">
    <property type="entry name" value="Multiple RNA-binding domain-containing protein 1"/>
    <property type="match status" value="1"/>
</dbReference>
<dbReference type="FunFam" id="3.30.70.330:FF:001748">
    <property type="entry name" value="Multiple RNA-binding domain-containing protein 1"/>
    <property type="match status" value="1"/>
</dbReference>
<dbReference type="Gene3D" id="3.30.70.330">
    <property type="match status" value="5"/>
</dbReference>
<dbReference type="InterPro" id="IPR034482">
    <property type="entry name" value="Mrd1_RRM3"/>
</dbReference>
<dbReference type="InterPro" id="IPR012677">
    <property type="entry name" value="Nucleotide-bd_a/b_plait_sf"/>
</dbReference>
<dbReference type="InterPro" id="IPR035979">
    <property type="entry name" value="RBD_domain_sf"/>
</dbReference>
<dbReference type="InterPro" id="IPR000504">
    <property type="entry name" value="RRM_dom"/>
</dbReference>
<dbReference type="InterPro" id="IPR003954">
    <property type="entry name" value="RRM_dom_euk"/>
</dbReference>
<dbReference type="PANTHER" id="PTHR10352">
    <property type="entry name" value="EUKARYOTIC TRANSLATION INITIATION FACTOR 3 SUBUNIT G"/>
    <property type="match status" value="1"/>
</dbReference>
<dbReference type="Pfam" id="PF00076">
    <property type="entry name" value="RRM_1"/>
    <property type="match status" value="5"/>
</dbReference>
<dbReference type="SMART" id="SM00360">
    <property type="entry name" value="RRM"/>
    <property type="match status" value="5"/>
</dbReference>
<dbReference type="SMART" id="SM00361">
    <property type="entry name" value="RRM_1"/>
    <property type="match status" value="1"/>
</dbReference>
<dbReference type="SUPFAM" id="SSF54928">
    <property type="entry name" value="RNA-binding domain, RBD"/>
    <property type="match status" value="4"/>
</dbReference>
<dbReference type="PROSITE" id="PS50102">
    <property type="entry name" value="RRM"/>
    <property type="match status" value="5"/>
</dbReference>
<keyword id="KW-0539">Nucleus</keyword>
<keyword id="KW-1185">Reference proteome</keyword>
<keyword id="KW-0677">Repeat</keyword>
<keyword id="KW-0687">Ribonucleoprotein</keyword>
<keyword id="KW-0694">RNA-binding</keyword>
<keyword id="KW-0698">rRNA processing</keyword>
<name>MRD1_EMENI</name>
<evidence type="ECO:0000250" key="1"/>
<evidence type="ECO:0000255" key="2">
    <source>
        <dbReference type="PROSITE-ProRule" id="PRU00176"/>
    </source>
</evidence>
<evidence type="ECO:0000256" key="3">
    <source>
        <dbReference type="SAM" id="MobiDB-lite"/>
    </source>
</evidence>
<evidence type="ECO:0000305" key="4"/>
<protein>
    <recommendedName>
        <fullName>Multiple RNA-binding domain-containing protein 1</fullName>
    </recommendedName>
</protein>
<reference key="1">
    <citation type="journal article" date="2005" name="Nature">
        <title>Sequencing of Aspergillus nidulans and comparative analysis with A. fumigatus and A. oryzae.</title>
        <authorList>
            <person name="Galagan J.E."/>
            <person name="Calvo S.E."/>
            <person name="Cuomo C."/>
            <person name="Ma L.-J."/>
            <person name="Wortman J.R."/>
            <person name="Batzoglou S."/>
            <person name="Lee S.-I."/>
            <person name="Bastuerkmen M."/>
            <person name="Spevak C.C."/>
            <person name="Clutterbuck J."/>
            <person name="Kapitonov V."/>
            <person name="Jurka J."/>
            <person name="Scazzocchio C."/>
            <person name="Farman M.L."/>
            <person name="Butler J."/>
            <person name="Purcell S."/>
            <person name="Harris S."/>
            <person name="Braus G.H."/>
            <person name="Draht O."/>
            <person name="Busch S."/>
            <person name="D'Enfert C."/>
            <person name="Bouchier C."/>
            <person name="Goldman G.H."/>
            <person name="Bell-Pedersen D."/>
            <person name="Griffiths-Jones S."/>
            <person name="Doonan J.H."/>
            <person name="Yu J."/>
            <person name="Vienken K."/>
            <person name="Pain A."/>
            <person name="Freitag M."/>
            <person name="Selker E.U."/>
            <person name="Archer D.B."/>
            <person name="Penalva M.A."/>
            <person name="Oakley B.R."/>
            <person name="Momany M."/>
            <person name="Tanaka T."/>
            <person name="Kumagai T."/>
            <person name="Asai K."/>
            <person name="Machida M."/>
            <person name="Nierman W.C."/>
            <person name="Denning D.W."/>
            <person name="Caddick M.X."/>
            <person name="Hynes M."/>
            <person name="Paoletti M."/>
            <person name="Fischer R."/>
            <person name="Miller B.L."/>
            <person name="Dyer P.S."/>
            <person name="Sachs M.S."/>
            <person name="Osmani S.A."/>
            <person name="Birren B.W."/>
        </authorList>
    </citation>
    <scope>NUCLEOTIDE SEQUENCE [LARGE SCALE GENOMIC DNA]</scope>
    <source>
        <strain>FGSC A4 / ATCC 38163 / CBS 112.46 / NRRL 194 / M139</strain>
    </source>
</reference>
<reference key="2">
    <citation type="journal article" date="2009" name="Fungal Genet. Biol.">
        <title>The 2008 update of the Aspergillus nidulans genome annotation: a community effort.</title>
        <authorList>
            <person name="Wortman J.R."/>
            <person name="Gilsenan J.M."/>
            <person name="Joardar V."/>
            <person name="Deegan J."/>
            <person name="Clutterbuck J."/>
            <person name="Andersen M.R."/>
            <person name="Archer D."/>
            <person name="Bencina M."/>
            <person name="Braus G."/>
            <person name="Coutinho P."/>
            <person name="von Dohren H."/>
            <person name="Doonan J."/>
            <person name="Driessen A.J."/>
            <person name="Durek P."/>
            <person name="Espeso E."/>
            <person name="Fekete E."/>
            <person name="Flipphi M."/>
            <person name="Estrada C.G."/>
            <person name="Geysens S."/>
            <person name="Goldman G."/>
            <person name="de Groot P.W."/>
            <person name="Hansen K."/>
            <person name="Harris S.D."/>
            <person name="Heinekamp T."/>
            <person name="Helmstaedt K."/>
            <person name="Henrissat B."/>
            <person name="Hofmann G."/>
            <person name="Homan T."/>
            <person name="Horio T."/>
            <person name="Horiuchi H."/>
            <person name="James S."/>
            <person name="Jones M."/>
            <person name="Karaffa L."/>
            <person name="Karanyi Z."/>
            <person name="Kato M."/>
            <person name="Keller N."/>
            <person name="Kelly D.E."/>
            <person name="Kiel J.A."/>
            <person name="Kim J.M."/>
            <person name="van der Klei I.J."/>
            <person name="Klis F.M."/>
            <person name="Kovalchuk A."/>
            <person name="Krasevec N."/>
            <person name="Kubicek C.P."/>
            <person name="Liu B."/>
            <person name="Maccabe A."/>
            <person name="Meyer V."/>
            <person name="Mirabito P."/>
            <person name="Miskei M."/>
            <person name="Mos M."/>
            <person name="Mullins J."/>
            <person name="Nelson D.R."/>
            <person name="Nielsen J."/>
            <person name="Oakley B.R."/>
            <person name="Osmani S.A."/>
            <person name="Pakula T."/>
            <person name="Paszewski A."/>
            <person name="Paulsen I."/>
            <person name="Pilsyk S."/>
            <person name="Pocsi I."/>
            <person name="Punt P.J."/>
            <person name="Ram A.F."/>
            <person name="Ren Q."/>
            <person name="Robellet X."/>
            <person name="Robson G."/>
            <person name="Seiboth B."/>
            <person name="van Solingen P."/>
            <person name="Specht T."/>
            <person name="Sun J."/>
            <person name="Taheri-Talesh N."/>
            <person name="Takeshita N."/>
            <person name="Ussery D."/>
            <person name="vanKuyk P.A."/>
            <person name="Visser H."/>
            <person name="van de Vondervoort P.J."/>
            <person name="de Vries R.P."/>
            <person name="Walton J."/>
            <person name="Xiang X."/>
            <person name="Xiong Y."/>
            <person name="Zeng A.P."/>
            <person name="Brandt B.W."/>
            <person name="Cornell M.J."/>
            <person name="van den Hondel C.A."/>
            <person name="Visser J."/>
            <person name="Oliver S.G."/>
            <person name="Turner G."/>
        </authorList>
    </citation>
    <scope>GENOME REANNOTATION</scope>
    <source>
        <strain>FGSC A4 / ATCC 38163 / CBS 112.46 / NRRL 194 / M139</strain>
    </source>
</reference>
<organism>
    <name type="scientific">Emericella nidulans (strain FGSC A4 / ATCC 38163 / CBS 112.46 / NRRL 194 / M139)</name>
    <name type="common">Aspergillus nidulans</name>
    <dbReference type="NCBI Taxonomy" id="227321"/>
    <lineage>
        <taxon>Eukaryota</taxon>
        <taxon>Fungi</taxon>
        <taxon>Dikarya</taxon>
        <taxon>Ascomycota</taxon>
        <taxon>Pezizomycotina</taxon>
        <taxon>Eurotiomycetes</taxon>
        <taxon>Eurotiomycetidae</taxon>
        <taxon>Eurotiales</taxon>
        <taxon>Aspergillaceae</taxon>
        <taxon>Aspergillus</taxon>
        <taxon>Aspergillus subgen. Nidulantes</taxon>
    </lineage>
</organism>
<gene>
    <name type="primary">mrd1</name>
    <name type="ORF">AN0421</name>
</gene>
<sequence length="819" mass="91400">MESTRVFVSGLPPTLTNDQLKKHFETRFHVTDAHVLPKRRIGFVGFKSSEAAQQAVSYFNKTYMRMSKISVDIAKPIDAEPAHRKDSRTAQPDDALGNNLKRKRDGDTIKDSKTQEYLSLLQQPSKTRTWANDDQLPDPDETDSHAQEQEQPFDVDDQEELTYAQRKKAKLGQDANESSHVPVVAGYQPTTDESDGQPSPEKHEEELEDPQKDQAPVSDSDWLRSKTSRLLGLLDEDEQETFASPAAATNPTPIINSNVEKPEAESPEKPAESDLTKAPTAAEVDTNIENIRISARLFVRNLSYETKESELEPVFSPFGKIEEIHVAFDTRFTTSKGFAYVQYADPDAAVEAYRNLDGKIFQGRLLHILPASQKKTYKLDEHELSKLPLKKQKQIKRKQEAASSTFSWNSLYMNADAVMSSVAERIGVSKADLLDPTSSDAAVKQAHAETHVIQETKAYFKANGVNLDAFKQRERGNLAILVKNFSYGTKTEDLRKLFEPFGQITRLLMPPSGTIAIVAFARPDEAQKAFKSLAYRKLGDSILFLEKAPKDLFEADVPPQNPLPETKAVSQGFSTADTFAADEGDEEVMATATLFIKNLNFSTTNQSLIEAFRPLDGFVSARIKTKPDPKNPGQTLSMGFGFADFKTKAQAQAALAVMNGYTLDRHTLVVRASHKGMDAAEERRKEDTAKKIAARRTKIIIKNLPFQATKKDVRSLFGAYGQLRSVRVPKKFDRSARGFGFADFVSAREAENAMDALKNTHLLGRRLVLEFANEEAIDAEEEIQRIEKKVGEQLDRVKLQKLTGAGRKKFTVGAQDDES</sequence>
<proteinExistence type="inferred from homology"/>
<comment type="function">
    <text evidence="1">Involved in pre-rRNA processing.</text>
</comment>
<comment type="subcellular location">
    <subcellularLocation>
        <location evidence="1">Nucleus</location>
    </subcellularLocation>
</comment>
<comment type="similarity">
    <text evidence="4">Belongs to the RRM MRD1 family.</text>
</comment>
<feature type="chain" id="PRO_0000081641" description="Multiple RNA-binding domain-containing protein 1">
    <location>
        <begin position="1"/>
        <end position="819"/>
    </location>
</feature>
<feature type="domain" description="RRM 1" evidence="2">
    <location>
        <begin position="4"/>
        <end position="76"/>
    </location>
</feature>
<feature type="domain" description="RRM 2" evidence="2">
    <location>
        <begin position="295"/>
        <end position="373"/>
    </location>
</feature>
<feature type="domain" description="RRM 3" evidence="2">
    <location>
        <begin position="478"/>
        <end position="550"/>
    </location>
</feature>
<feature type="domain" description="RRM 4" evidence="2">
    <location>
        <begin position="592"/>
        <end position="675"/>
    </location>
</feature>
<feature type="domain" description="RRM 5" evidence="2">
    <location>
        <begin position="697"/>
        <end position="774"/>
    </location>
</feature>
<feature type="region of interest" description="Disordered" evidence="3">
    <location>
        <begin position="80"/>
        <end position="223"/>
    </location>
</feature>
<feature type="region of interest" description="Disordered" evidence="3">
    <location>
        <begin position="242"/>
        <end position="281"/>
    </location>
</feature>
<feature type="compositionally biased region" description="Basic and acidic residues" evidence="3">
    <location>
        <begin position="104"/>
        <end position="114"/>
    </location>
</feature>
<feature type="compositionally biased region" description="Polar residues" evidence="3">
    <location>
        <begin position="115"/>
        <end position="132"/>
    </location>
</feature>
<feature type="compositionally biased region" description="Acidic residues" evidence="3">
    <location>
        <begin position="151"/>
        <end position="160"/>
    </location>
</feature>
<feature type="compositionally biased region" description="Basic and acidic residues" evidence="3">
    <location>
        <begin position="200"/>
        <end position="212"/>
    </location>
</feature>
<feature type="compositionally biased region" description="Polar residues" evidence="3">
    <location>
        <begin position="247"/>
        <end position="259"/>
    </location>
</feature>
<feature type="compositionally biased region" description="Basic and acidic residues" evidence="3">
    <location>
        <begin position="260"/>
        <end position="275"/>
    </location>
</feature>